<name>PEK12_ARATH</name>
<sequence length="720" mass="76302">MSDLGESPSSSPPAPPADTAPPPETPSENSALPPVDSSPPSPPADSSSTPPLSEPSTPPPDSQLPPLPSILPPLTDSPPPPSDSSPPVDSTPSPPPPTSNESPSPPEDSETPPAPPNESNDNNPPPSQDLQSPPPSSPSPNVGPTNPESPPLQSPPAPPASDPTNSPPASPLDPTNPPPIQPSGPATSPPANPNAPPSPFPTVPPKTPSSGPVVSPSLTSPSKGTPTPNQGNGDGGGGGGGYQGKTMVGMAVAGFAIMALIGVVFLVRRKKKRNIDSYNHSQYLPHPNFSVKSDGFLYGQDPGKGYSSGPNGSMYNNSQQQQSSMGNSYGTAGGGYPHHQMQSSGTPDSAILGSGQTHFSYEELAEITQGFARKNILGEGGFGCVYKGTLQDGKVVAVKQLKAGSGQGDREFKAEVEIISRVHHRHLVSLVGYCISDQHRLLIYEYVSNQTLEHHLHGKGLPVLEWSKRVRIAIGSAKGLAYLHEDCHPKIIHRDIKSANILLDDEYEAQVADFGLARLNDTTQTHVSTRVMGTFGYLAPEYASSGKLTDRSDVFSFGVVLLELVTGRKPVDQTQPLGEESLVEWARPLLLKAIETGDLSELIDTRLEKRYVEHEVFRMIETAAACVRHSGPKRPRMVQVVRALDCDGDSGDISNGIKIGQSTTYDSGQYNEDIMKFRKMAFGGDNSVESGLYSGNYSAKSSSDFSGNESETRPFNNRRF</sequence>
<gene>
    <name type="primary">PERK12</name>
    <name type="synonym">IGI1</name>
    <name type="ordered locus">At1g23540</name>
    <name type="ORF">F28C11.17</name>
    <name type="ORF">F5O8.10</name>
</gene>
<accession>Q9ZUE0</accession>
<accession>Q9LQC5</accession>
<comment type="function">
    <text evidence="8">Regulates the auxin-related MAX (More Axillary Growth) pathway during the shoot branching.</text>
</comment>
<comment type="catalytic activity">
    <reaction>
        <text>L-seryl-[protein] + ATP = O-phospho-L-seryl-[protein] + ADP + H(+)</text>
        <dbReference type="Rhea" id="RHEA:17989"/>
        <dbReference type="Rhea" id="RHEA-COMP:9863"/>
        <dbReference type="Rhea" id="RHEA-COMP:11604"/>
        <dbReference type="ChEBI" id="CHEBI:15378"/>
        <dbReference type="ChEBI" id="CHEBI:29999"/>
        <dbReference type="ChEBI" id="CHEBI:30616"/>
        <dbReference type="ChEBI" id="CHEBI:83421"/>
        <dbReference type="ChEBI" id="CHEBI:456216"/>
        <dbReference type="EC" id="2.7.11.1"/>
    </reaction>
</comment>
<comment type="catalytic activity">
    <reaction>
        <text>L-threonyl-[protein] + ATP = O-phospho-L-threonyl-[protein] + ADP + H(+)</text>
        <dbReference type="Rhea" id="RHEA:46608"/>
        <dbReference type="Rhea" id="RHEA-COMP:11060"/>
        <dbReference type="Rhea" id="RHEA-COMP:11605"/>
        <dbReference type="ChEBI" id="CHEBI:15378"/>
        <dbReference type="ChEBI" id="CHEBI:30013"/>
        <dbReference type="ChEBI" id="CHEBI:30616"/>
        <dbReference type="ChEBI" id="CHEBI:61977"/>
        <dbReference type="ChEBI" id="CHEBI:456216"/>
        <dbReference type="EC" id="2.7.11.1"/>
    </reaction>
</comment>
<comment type="subcellular location">
    <subcellularLocation>
        <location evidence="1">Cell membrane</location>
        <topology evidence="1">Single-pass membrane protein</topology>
    </subcellularLocation>
</comment>
<comment type="tissue specificity">
    <text evidence="7 8">Mostly expressed in apical parts, including flower buds, and particularly in anthers. Also present in root hairs.</text>
</comment>
<comment type="induction">
    <text evidence="8">Repressed by auxin (IAA) treatment.</text>
</comment>
<comment type="similarity">
    <text evidence="4">Belongs to the protein kinase superfamily. Ser/Thr protein kinase family.</text>
</comment>
<comment type="sequence caution" evidence="9">
    <conflict type="erroneous gene model prediction">
        <sequence resource="EMBL-CDS" id="AAC98010"/>
    </conflict>
</comment>
<comment type="sequence caution" evidence="9">
    <conflict type="erroneous gene model prediction">
        <sequence resource="EMBL-CDS" id="AAF79592"/>
    </conflict>
</comment>
<proteinExistence type="evidence at transcript level"/>
<feature type="chain" id="PRO_0000400064" description="Proline-rich receptor-like protein kinase PERK12">
    <location>
        <begin position="1"/>
        <end position="720"/>
    </location>
</feature>
<feature type="topological domain" description="Extracellular" evidence="3">
    <location>
        <begin position="1"/>
        <end position="246"/>
    </location>
</feature>
<feature type="transmembrane region" description="Helical" evidence="3">
    <location>
        <begin position="247"/>
        <end position="267"/>
    </location>
</feature>
<feature type="topological domain" description="Cytoplasmic" evidence="3">
    <location>
        <begin position="268"/>
        <end position="720"/>
    </location>
</feature>
<feature type="domain" description="Protein kinase" evidence="4">
    <location>
        <begin position="371"/>
        <end position="624"/>
    </location>
</feature>
<feature type="region of interest" description="Disordered" evidence="6">
    <location>
        <begin position="1"/>
        <end position="240"/>
    </location>
</feature>
<feature type="region of interest" description="Disordered" evidence="6">
    <location>
        <begin position="300"/>
        <end position="349"/>
    </location>
</feature>
<feature type="region of interest" description="Disordered" evidence="6">
    <location>
        <begin position="698"/>
        <end position="720"/>
    </location>
</feature>
<feature type="compositionally biased region" description="Pro residues" evidence="6">
    <location>
        <begin position="10"/>
        <end position="25"/>
    </location>
</feature>
<feature type="compositionally biased region" description="Low complexity" evidence="6">
    <location>
        <begin position="26"/>
        <end position="35"/>
    </location>
</feature>
<feature type="compositionally biased region" description="Pro residues" evidence="6">
    <location>
        <begin position="52"/>
        <end position="84"/>
    </location>
</feature>
<feature type="compositionally biased region" description="Pro residues" evidence="6">
    <location>
        <begin position="92"/>
        <end position="116"/>
    </location>
</feature>
<feature type="compositionally biased region" description="Pro residues" evidence="6">
    <location>
        <begin position="123"/>
        <end position="138"/>
    </location>
</feature>
<feature type="compositionally biased region" description="Pro residues" evidence="6">
    <location>
        <begin position="147"/>
        <end position="207"/>
    </location>
</feature>
<feature type="compositionally biased region" description="Low complexity" evidence="6">
    <location>
        <begin position="311"/>
        <end position="330"/>
    </location>
</feature>
<feature type="active site" description="Proton acceptor" evidence="4 5">
    <location>
        <position position="495"/>
    </location>
</feature>
<feature type="binding site" evidence="4">
    <location>
        <begin position="377"/>
        <end position="385"/>
    </location>
    <ligand>
        <name>ATP</name>
        <dbReference type="ChEBI" id="CHEBI:30616"/>
    </ligand>
</feature>
<feature type="binding site" evidence="4">
    <location>
        <position position="399"/>
    </location>
    <ligand>
        <name>ATP</name>
        <dbReference type="ChEBI" id="CHEBI:30616"/>
    </ligand>
</feature>
<feature type="modified residue" description="Phosphotyrosine" evidence="2">
    <location>
        <position position="444"/>
    </location>
</feature>
<feature type="modified residue" description="Phosphoserine" evidence="2">
    <location>
        <position position="528"/>
    </location>
</feature>
<feature type="modified residue" description="Phosphothreonine" evidence="2">
    <location>
        <position position="529"/>
    </location>
</feature>
<feature type="modified residue" description="Phosphothreonine" evidence="2">
    <location>
        <position position="534"/>
    </location>
</feature>
<feature type="modified residue" description="Phosphotyrosine" evidence="2">
    <location>
        <position position="542"/>
    </location>
</feature>
<feature type="glycosylation site" description="N-linked (GlcNAc...) asparagine" evidence="3">
    <location>
        <position position="117"/>
    </location>
</feature>
<evidence type="ECO:0000250" key="1"/>
<evidence type="ECO:0000250" key="2">
    <source>
        <dbReference type="UniProtKB" id="O48814"/>
    </source>
</evidence>
<evidence type="ECO:0000255" key="3"/>
<evidence type="ECO:0000255" key="4">
    <source>
        <dbReference type="PROSITE-ProRule" id="PRU00159"/>
    </source>
</evidence>
<evidence type="ECO:0000255" key="5">
    <source>
        <dbReference type="PROSITE-ProRule" id="PRU10027"/>
    </source>
</evidence>
<evidence type="ECO:0000256" key="6">
    <source>
        <dbReference type="SAM" id="MobiDB-lite"/>
    </source>
</evidence>
<evidence type="ECO:0000269" key="7">
    <source>
    </source>
</evidence>
<evidence type="ECO:0000269" key="8">
    <source>
    </source>
</evidence>
<evidence type="ECO:0000305" key="9"/>
<dbReference type="EC" id="2.7.11.1"/>
<dbReference type="EMBL" id="AC005990">
    <property type="protein sequence ID" value="AAC98010.1"/>
    <property type="status" value="ALT_SEQ"/>
    <property type="molecule type" value="Genomic_DNA"/>
</dbReference>
<dbReference type="EMBL" id="AC007945">
    <property type="protein sequence ID" value="AAF79592.1"/>
    <property type="status" value="ALT_SEQ"/>
    <property type="molecule type" value="Genomic_DNA"/>
</dbReference>
<dbReference type="EMBL" id="CP002684">
    <property type="protein sequence ID" value="AEE30401.1"/>
    <property type="molecule type" value="Genomic_DNA"/>
</dbReference>
<dbReference type="PIR" id="B86369">
    <property type="entry name" value="B86369"/>
</dbReference>
<dbReference type="RefSeq" id="NP_173768.2">
    <property type="nucleotide sequence ID" value="NM_102203.3"/>
</dbReference>
<dbReference type="SMR" id="Q9ZUE0"/>
<dbReference type="FunCoup" id="Q9ZUE0">
    <property type="interactions" value="4"/>
</dbReference>
<dbReference type="STRING" id="3702.Q9ZUE0"/>
<dbReference type="GlyCosmos" id="Q9ZUE0">
    <property type="glycosylation" value="1 site, No reported glycans"/>
</dbReference>
<dbReference type="GlyGen" id="Q9ZUE0">
    <property type="glycosylation" value="4 sites"/>
</dbReference>
<dbReference type="PaxDb" id="3702-AT1G23540.1"/>
<dbReference type="ProteomicsDB" id="236445"/>
<dbReference type="EnsemblPlants" id="AT1G23540.1">
    <property type="protein sequence ID" value="AT1G23540.1"/>
    <property type="gene ID" value="AT1G23540"/>
</dbReference>
<dbReference type="GeneID" id="838963"/>
<dbReference type="Gramene" id="AT1G23540.1">
    <property type="protein sequence ID" value="AT1G23540.1"/>
    <property type="gene ID" value="AT1G23540"/>
</dbReference>
<dbReference type="KEGG" id="ath:AT1G23540"/>
<dbReference type="Araport" id="AT1G23540"/>
<dbReference type="TAIR" id="AT1G23540">
    <property type="gene designation" value="PERK12"/>
</dbReference>
<dbReference type="eggNOG" id="KOG1187">
    <property type="taxonomic scope" value="Eukaryota"/>
</dbReference>
<dbReference type="HOGENOM" id="CLU_000288_106_3_1"/>
<dbReference type="InParanoid" id="Q9ZUE0"/>
<dbReference type="OMA" id="QHLHGSE"/>
<dbReference type="OrthoDB" id="4062651at2759"/>
<dbReference type="PhylomeDB" id="Q9ZUE0"/>
<dbReference type="PRO" id="PR:Q9ZUE0"/>
<dbReference type="Proteomes" id="UP000006548">
    <property type="component" value="Chromosome 1"/>
</dbReference>
<dbReference type="ExpressionAtlas" id="Q9ZUE0">
    <property type="expression patterns" value="baseline and differential"/>
</dbReference>
<dbReference type="GO" id="GO:0005886">
    <property type="term" value="C:plasma membrane"/>
    <property type="evidence" value="ECO:0007669"/>
    <property type="project" value="UniProtKB-SubCell"/>
</dbReference>
<dbReference type="GO" id="GO:0005524">
    <property type="term" value="F:ATP binding"/>
    <property type="evidence" value="ECO:0007669"/>
    <property type="project" value="UniProtKB-KW"/>
</dbReference>
<dbReference type="GO" id="GO:0106310">
    <property type="term" value="F:protein serine kinase activity"/>
    <property type="evidence" value="ECO:0007669"/>
    <property type="project" value="RHEA"/>
</dbReference>
<dbReference type="GO" id="GO:0004674">
    <property type="term" value="F:protein serine/threonine kinase activity"/>
    <property type="evidence" value="ECO:0007669"/>
    <property type="project" value="UniProtKB-KW"/>
</dbReference>
<dbReference type="GO" id="GO:0032502">
    <property type="term" value="P:developmental process"/>
    <property type="evidence" value="ECO:0000315"/>
    <property type="project" value="TAIR"/>
</dbReference>
<dbReference type="CDD" id="cd14066">
    <property type="entry name" value="STKc_IRAK"/>
    <property type="match status" value="1"/>
</dbReference>
<dbReference type="FunFam" id="3.30.200.20:FF:000212">
    <property type="entry name" value="Proline-rich receptor-like protein kinase PERK8"/>
    <property type="match status" value="1"/>
</dbReference>
<dbReference type="FunFam" id="1.10.510.10:FF:000173">
    <property type="entry name" value="proline-rich receptor-like protein kinase PERK8"/>
    <property type="match status" value="1"/>
</dbReference>
<dbReference type="Gene3D" id="3.30.200.20">
    <property type="entry name" value="Phosphorylase Kinase, domain 1"/>
    <property type="match status" value="1"/>
</dbReference>
<dbReference type="Gene3D" id="1.10.510.10">
    <property type="entry name" value="Transferase(Phosphotransferase) domain 1"/>
    <property type="match status" value="1"/>
</dbReference>
<dbReference type="InterPro" id="IPR011009">
    <property type="entry name" value="Kinase-like_dom_sf"/>
</dbReference>
<dbReference type="InterPro" id="IPR047117">
    <property type="entry name" value="PERK1-13-like"/>
</dbReference>
<dbReference type="InterPro" id="IPR000719">
    <property type="entry name" value="Prot_kinase_dom"/>
</dbReference>
<dbReference type="InterPro" id="IPR017441">
    <property type="entry name" value="Protein_kinase_ATP_BS"/>
</dbReference>
<dbReference type="InterPro" id="IPR001245">
    <property type="entry name" value="Ser-Thr/Tyr_kinase_cat_dom"/>
</dbReference>
<dbReference type="InterPro" id="IPR008271">
    <property type="entry name" value="Ser/Thr_kinase_AS"/>
</dbReference>
<dbReference type="PANTHER" id="PTHR47982:SF21">
    <property type="entry name" value="PROLINE-RICH RECEPTOR-LIKE PROTEIN KINASE PERK12"/>
    <property type="match status" value="1"/>
</dbReference>
<dbReference type="PANTHER" id="PTHR47982">
    <property type="entry name" value="PROLINE-RICH RECEPTOR-LIKE PROTEIN KINASE PERK4"/>
    <property type="match status" value="1"/>
</dbReference>
<dbReference type="Pfam" id="PF07714">
    <property type="entry name" value="PK_Tyr_Ser-Thr"/>
    <property type="match status" value="1"/>
</dbReference>
<dbReference type="SMART" id="SM00220">
    <property type="entry name" value="S_TKc"/>
    <property type="match status" value="1"/>
</dbReference>
<dbReference type="SUPFAM" id="SSF56112">
    <property type="entry name" value="Protein kinase-like (PK-like)"/>
    <property type="match status" value="1"/>
</dbReference>
<dbReference type="PROSITE" id="PS00107">
    <property type="entry name" value="PROTEIN_KINASE_ATP"/>
    <property type="match status" value="1"/>
</dbReference>
<dbReference type="PROSITE" id="PS50011">
    <property type="entry name" value="PROTEIN_KINASE_DOM"/>
    <property type="match status" value="1"/>
</dbReference>
<dbReference type="PROSITE" id="PS00108">
    <property type="entry name" value="PROTEIN_KINASE_ST"/>
    <property type="match status" value="1"/>
</dbReference>
<protein>
    <recommendedName>
        <fullName>Proline-rich receptor-like protein kinase PERK12</fullName>
        <ecNumber>2.7.11.1</ecNumber>
    </recommendedName>
    <alternativeName>
        <fullName>Proline-rich extensin-like receptor kinase 12</fullName>
        <shortName>AtPERK12</shortName>
    </alternativeName>
    <alternativeName>
        <fullName>Protein INFLORESCENCE GROWTH INHIBITOR 1</fullName>
    </alternativeName>
</protein>
<keyword id="KW-0067">ATP-binding</keyword>
<keyword id="KW-1003">Cell membrane</keyword>
<keyword id="KW-0325">Glycoprotein</keyword>
<keyword id="KW-0418">Kinase</keyword>
<keyword id="KW-0472">Membrane</keyword>
<keyword id="KW-0547">Nucleotide-binding</keyword>
<keyword id="KW-0597">Phosphoprotein</keyword>
<keyword id="KW-1185">Reference proteome</keyword>
<keyword id="KW-0723">Serine/threonine-protein kinase</keyword>
<keyword id="KW-0808">Transferase</keyword>
<keyword id="KW-0812">Transmembrane</keyword>
<keyword id="KW-1133">Transmembrane helix</keyword>
<reference key="1">
    <citation type="journal article" date="2000" name="Nature">
        <title>Sequence and analysis of chromosome 1 of the plant Arabidopsis thaliana.</title>
        <authorList>
            <person name="Theologis A."/>
            <person name="Ecker J.R."/>
            <person name="Palm C.J."/>
            <person name="Federspiel N.A."/>
            <person name="Kaul S."/>
            <person name="White O."/>
            <person name="Alonso J."/>
            <person name="Altafi H."/>
            <person name="Araujo R."/>
            <person name="Bowman C.L."/>
            <person name="Brooks S.Y."/>
            <person name="Buehler E."/>
            <person name="Chan A."/>
            <person name="Chao Q."/>
            <person name="Chen H."/>
            <person name="Cheuk R.F."/>
            <person name="Chin C.W."/>
            <person name="Chung M.K."/>
            <person name="Conn L."/>
            <person name="Conway A.B."/>
            <person name="Conway A.R."/>
            <person name="Creasy T.H."/>
            <person name="Dewar K."/>
            <person name="Dunn P."/>
            <person name="Etgu P."/>
            <person name="Feldblyum T.V."/>
            <person name="Feng J.-D."/>
            <person name="Fong B."/>
            <person name="Fujii C.Y."/>
            <person name="Gill J.E."/>
            <person name="Goldsmith A.D."/>
            <person name="Haas B."/>
            <person name="Hansen N.F."/>
            <person name="Hughes B."/>
            <person name="Huizar L."/>
            <person name="Hunter J.L."/>
            <person name="Jenkins J."/>
            <person name="Johnson-Hopson C."/>
            <person name="Khan S."/>
            <person name="Khaykin E."/>
            <person name="Kim C.J."/>
            <person name="Koo H.L."/>
            <person name="Kremenetskaia I."/>
            <person name="Kurtz D.B."/>
            <person name="Kwan A."/>
            <person name="Lam B."/>
            <person name="Langin-Hooper S."/>
            <person name="Lee A."/>
            <person name="Lee J.M."/>
            <person name="Lenz C.A."/>
            <person name="Li J.H."/>
            <person name="Li Y.-P."/>
            <person name="Lin X."/>
            <person name="Liu S.X."/>
            <person name="Liu Z.A."/>
            <person name="Luros J.S."/>
            <person name="Maiti R."/>
            <person name="Marziali A."/>
            <person name="Militscher J."/>
            <person name="Miranda M."/>
            <person name="Nguyen M."/>
            <person name="Nierman W.C."/>
            <person name="Osborne B.I."/>
            <person name="Pai G."/>
            <person name="Peterson J."/>
            <person name="Pham P.K."/>
            <person name="Rizzo M."/>
            <person name="Rooney T."/>
            <person name="Rowley D."/>
            <person name="Sakano H."/>
            <person name="Salzberg S.L."/>
            <person name="Schwartz J.R."/>
            <person name="Shinn P."/>
            <person name="Southwick A.M."/>
            <person name="Sun H."/>
            <person name="Tallon L.J."/>
            <person name="Tambunga G."/>
            <person name="Toriumi M.J."/>
            <person name="Town C.D."/>
            <person name="Utterback T."/>
            <person name="Van Aken S."/>
            <person name="Vaysberg M."/>
            <person name="Vysotskaia V.S."/>
            <person name="Walker M."/>
            <person name="Wu D."/>
            <person name="Yu G."/>
            <person name="Fraser C.M."/>
            <person name="Venter J.C."/>
            <person name="Davis R.W."/>
        </authorList>
    </citation>
    <scope>NUCLEOTIDE SEQUENCE [LARGE SCALE GENOMIC DNA]</scope>
    <source>
        <strain>cv. Columbia</strain>
    </source>
</reference>
<reference key="2">
    <citation type="journal article" date="2017" name="Plant J.">
        <title>Araport11: a complete reannotation of the Arabidopsis thaliana reference genome.</title>
        <authorList>
            <person name="Cheng C.Y."/>
            <person name="Krishnakumar V."/>
            <person name="Chan A.P."/>
            <person name="Thibaud-Nissen F."/>
            <person name="Schobel S."/>
            <person name="Town C.D."/>
        </authorList>
    </citation>
    <scope>GENOME REANNOTATION</scope>
    <source>
        <strain>cv. Columbia</strain>
    </source>
</reference>
<reference key="3">
    <citation type="journal article" date="2002" name="Plant Mol. Biol.">
        <title>The proline-rich, extensin-like receptor kinase-1 (PERK1) gene is rapidly induced by wounding.</title>
        <authorList>
            <person name="Silva N.F."/>
            <person name="Goring D.R."/>
        </authorList>
    </citation>
    <scope>GENE FAMILY</scope>
</reference>
<reference key="4">
    <citation type="journal article" date="2004" name="Plant Cell Physiol.">
        <title>A comprehensive expression analysis of the Arabidopsis proline-rich extensin-like receptor kinase gene family using bioinformatic and experimental approaches.</title>
        <authorList>
            <person name="Nakhamchik A."/>
            <person name="Zhao Z."/>
            <person name="Provart N.J."/>
            <person name="Shiu S.-H."/>
            <person name="Keatley S.K."/>
            <person name="Cameron R.K."/>
            <person name="Goring D.R."/>
        </authorList>
    </citation>
    <scope>TISSUE SPECIFICITY</scope>
    <scope>GENE FAMILY</scope>
    <scope>NOMENCLATURE</scope>
</reference>
<reference key="5">
    <citation type="journal article" date="2010" name="Plant Mol. Biol.">
        <title>Over-expression of the IGI1 leading to altered shoot-branching development related to MAX pathway in Arabidopsis.</title>
        <authorList>
            <person name="Hwang I."/>
            <person name="Kim S.Y."/>
            <person name="Kim C.S."/>
            <person name="Park Y."/>
            <person name="Tripathi G.R."/>
            <person name="Kim S.-K."/>
            <person name="Cheong H."/>
        </authorList>
    </citation>
    <scope>FUNCTION</scope>
    <scope>TISSUE SPECIFICITY</scope>
    <scope>INDUCTION BY AUXIN</scope>
</reference>
<organism>
    <name type="scientific">Arabidopsis thaliana</name>
    <name type="common">Mouse-ear cress</name>
    <dbReference type="NCBI Taxonomy" id="3702"/>
    <lineage>
        <taxon>Eukaryota</taxon>
        <taxon>Viridiplantae</taxon>
        <taxon>Streptophyta</taxon>
        <taxon>Embryophyta</taxon>
        <taxon>Tracheophyta</taxon>
        <taxon>Spermatophyta</taxon>
        <taxon>Magnoliopsida</taxon>
        <taxon>eudicotyledons</taxon>
        <taxon>Gunneridae</taxon>
        <taxon>Pentapetalae</taxon>
        <taxon>rosids</taxon>
        <taxon>malvids</taxon>
        <taxon>Brassicales</taxon>
        <taxon>Brassicaceae</taxon>
        <taxon>Camelineae</taxon>
        <taxon>Arabidopsis</taxon>
    </lineage>
</organism>